<protein>
    <recommendedName>
        <fullName evidence="1">Iron-sulfur cluster repair protein YtfE</fullName>
    </recommendedName>
</protein>
<dbReference type="EMBL" id="CP000668">
    <property type="protein sequence ID" value="ABP41930.1"/>
    <property type="molecule type" value="Genomic_DNA"/>
</dbReference>
<dbReference type="RefSeq" id="WP_002210159.1">
    <property type="nucleotide sequence ID" value="NZ_CP009715.1"/>
</dbReference>
<dbReference type="SMR" id="A4TRL8"/>
<dbReference type="GeneID" id="57975183"/>
<dbReference type="KEGG" id="ypp:YPDSF_3580"/>
<dbReference type="PATRIC" id="fig|386656.14.peg.237"/>
<dbReference type="GO" id="GO:0005737">
    <property type="term" value="C:cytoplasm"/>
    <property type="evidence" value="ECO:0007669"/>
    <property type="project" value="UniProtKB-SubCell"/>
</dbReference>
<dbReference type="GO" id="GO:0046872">
    <property type="term" value="F:metal ion binding"/>
    <property type="evidence" value="ECO:0007669"/>
    <property type="project" value="UniProtKB-KW"/>
</dbReference>
<dbReference type="GO" id="GO:0030091">
    <property type="term" value="P:protein repair"/>
    <property type="evidence" value="ECO:0007669"/>
    <property type="project" value="UniProtKB-UniRule"/>
</dbReference>
<dbReference type="GO" id="GO:0051409">
    <property type="term" value="P:response to nitrosative stress"/>
    <property type="evidence" value="ECO:0007669"/>
    <property type="project" value="UniProtKB-UniRule"/>
</dbReference>
<dbReference type="GO" id="GO:0006979">
    <property type="term" value="P:response to oxidative stress"/>
    <property type="evidence" value="ECO:0007669"/>
    <property type="project" value="UniProtKB-UniRule"/>
</dbReference>
<dbReference type="CDD" id="cd12108">
    <property type="entry name" value="Hr-like"/>
    <property type="match status" value="1"/>
</dbReference>
<dbReference type="Gene3D" id="1.20.120.520">
    <property type="entry name" value="nmb1532 protein domain like"/>
    <property type="match status" value="1"/>
</dbReference>
<dbReference type="HAMAP" id="MF_01606">
    <property type="entry name" value="RIC_YtfE"/>
    <property type="match status" value="1"/>
</dbReference>
<dbReference type="InterPro" id="IPR023742">
    <property type="entry name" value="FeS-repair_YftE"/>
</dbReference>
<dbReference type="InterPro" id="IPR012312">
    <property type="entry name" value="Hemerythrin-like"/>
</dbReference>
<dbReference type="InterPro" id="IPR019903">
    <property type="entry name" value="RIC_family"/>
</dbReference>
<dbReference type="NCBIfam" id="TIGR03652">
    <property type="entry name" value="FeS_repair_RIC"/>
    <property type="match status" value="1"/>
</dbReference>
<dbReference type="NCBIfam" id="NF008221">
    <property type="entry name" value="PRK10992.1"/>
    <property type="match status" value="1"/>
</dbReference>
<dbReference type="PANTHER" id="PTHR36438">
    <property type="entry name" value="IRON-SULFUR CLUSTER REPAIR PROTEIN YTFE"/>
    <property type="match status" value="1"/>
</dbReference>
<dbReference type="PANTHER" id="PTHR36438:SF1">
    <property type="entry name" value="IRON-SULFUR CLUSTER REPAIR PROTEIN YTFE"/>
    <property type="match status" value="1"/>
</dbReference>
<dbReference type="Pfam" id="PF01814">
    <property type="entry name" value="Hemerythrin"/>
    <property type="match status" value="1"/>
</dbReference>
<dbReference type="Pfam" id="PF04405">
    <property type="entry name" value="ScdA_N"/>
    <property type="match status" value="1"/>
</dbReference>
<proteinExistence type="inferred from homology"/>
<reference key="1">
    <citation type="submission" date="2007-02" db="EMBL/GenBank/DDBJ databases">
        <title>Complete sequence of chromosome of Yersinia pestis Pestoides F.</title>
        <authorList>
            <consortium name="US DOE Joint Genome Institute"/>
            <person name="Copeland A."/>
            <person name="Lucas S."/>
            <person name="Lapidus A."/>
            <person name="Barry K."/>
            <person name="Detter J.C."/>
            <person name="Glavina del Rio T."/>
            <person name="Hammon N."/>
            <person name="Israni S."/>
            <person name="Dalin E."/>
            <person name="Tice H."/>
            <person name="Pitluck S."/>
            <person name="Di Bartolo G."/>
            <person name="Chain P."/>
            <person name="Malfatti S."/>
            <person name="Shin M."/>
            <person name="Vergez L."/>
            <person name="Schmutz J."/>
            <person name="Larimer F."/>
            <person name="Land M."/>
            <person name="Hauser L."/>
            <person name="Worsham P."/>
            <person name="Chu M."/>
            <person name="Bearden S."/>
            <person name="Garcia E."/>
            <person name="Richardson P."/>
        </authorList>
    </citation>
    <scope>NUCLEOTIDE SEQUENCE [LARGE SCALE GENOMIC DNA]</scope>
    <source>
        <strain>Pestoides F</strain>
    </source>
</reference>
<sequence length="221" mass="25063">MDYRNQSLGALAIAIPRATKLFRQHQLDFCCGGKQTLLRAANKLNLDIDALEAQLSALQTEPHSSEDWQQQPLTNLISFIISRYHDRHREQLPELVLMAEKVERVHGEKPTCPRGLAAELSAILEELTQHMYKEEQILFPMIQRGMGSQASGPIFVMEAEHDAVGQQLDVVKQLTQNVTPPEGACNTWRALYTGINEFITDLMEHIHLENNLLFPRALRGE</sequence>
<organism>
    <name type="scientific">Yersinia pestis (strain Pestoides F)</name>
    <dbReference type="NCBI Taxonomy" id="386656"/>
    <lineage>
        <taxon>Bacteria</taxon>
        <taxon>Pseudomonadati</taxon>
        <taxon>Pseudomonadota</taxon>
        <taxon>Gammaproteobacteria</taxon>
        <taxon>Enterobacterales</taxon>
        <taxon>Yersiniaceae</taxon>
        <taxon>Yersinia</taxon>
    </lineage>
</organism>
<feature type="chain" id="PRO_1000069422" description="Iron-sulfur cluster repair protein YtfE">
    <location>
        <begin position="1"/>
        <end position="221"/>
    </location>
</feature>
<comment type="function">
    <text evidence="1">Di-iron-containing protein involved in the repair of iron-sulfur clusters damaged by oxidative and nitrosative stress conditions.</text>
</comment>
<comment type="subunit">
    <text evidence="1">Homodimer.</text>
</comment>
<comment type="subcellular location">
    <subcellularLocation>
        <location evidence="1">Cytoplasm</location>
    </subcellularLocation>
</comment>
<comment type="similarity">
    <text evidence="1">Belongs to the RIC family. YtfE subfamily.</text>
</comment>
<name>YTFE_YERPP</name>
<gene>
    <name evidence="1" type="primary">ytfE</name>
    <name type="ordered locus">YPDSF_3580</name>
</gene>
<evidence type="ECO:0000255" key="1">
    <source>
        <dbReference type="HAMAP-Rule" id="MF_01606"/>
    </source>
</evidence>
<accession>A4TRL8</accession>
<keyword id="KW-0963">Cytoplasm</keyword>
<keyword id="KW-0408">Iron</keyword>
<keyword id="KW-0479">Metal-binding</keyword>
<keyword id="KW-0346">Stress response</keyword>